<evidence type="ECO:0000255" key="1">
    <source>
        <dbReference type="HAMAP-Rule" id="MF_01445"/>
    </source>
</evidence>
<dbReference type="EC" id="2.3.1.234" evidence="1"/>
<dbReference type="EMBL" id="CU468135">
    <property type="protein sequence ID" value="CAO95464.1"/>
    <property type="molecule type" value="Genomic_DNA"/>
</dbReference>
<dbReference type="RefSeq" id="WP_012440175.1">
    <property type="nucleotide sequence ID" value="NC_010694.1"/>
</dbReference>
<dbReference type="SMR" id="B2VGJ0"/>
<dbReference type="STRING" id="465817.ETA_04180"/>
<dbReference type="KEGG" id="eta:ETA_04180"/>
<dbReference type="eggNOG" id="COG0533">
    <property type="taxonomic scope" value="Bacteria"/>
</dbReference>
<dbReference type="HOGENOM" id="CLU_023208_0_0_6"/>
<dbReference type="OrthoDB" id="9806197at2"/>
<dbReference type="Proteomes" id="UP000001726">
    <property type="component" value="Chromosome"/>
</dbReference>
<dbReference type="GO" id="GO:0005737">
    <property type="term" value="C:cytoplasm"/>
    <property type="evidence" value="ECO:0007669"/>
    <property type="project" value="UniProtKB-SubCell"/>
</dbReference>
<dbReference type="GO" id="GO:0005506">
    <property type="term" value="F:iron ion binding"/>
    <property type="evidence" value="ECO:0007669"/>
    <property type="project" value="UniProtKB-UniRule"/>
</dbReference>
<dbReference type="GO" id="GO:0061711">
    <property type="term" value="F:N(6)-L-threonylcarbamoyladenine synthase activity"/>
    <property type="evidence" value="ECO:0007669"/>
    <property type="project" value="UniProtKB-EC"/>
</dbReference>
<dbReference type="GO" id="GO:0002949">
    <property type="term" value="P:tRNA threonylcarbamoyladenosine modification"/>
    <property type="evidence" value="ECO:0007669"/>
    <property type="project" value="UniProtKB-UniRule"/>
</dbReference>
<dbReference type="CDD" id="cd24133">
    <property type="entry name" value="ASKHA_NBD_TsaD_bac"/>
    <property type="match status" value="1"/>
</dbReference>
<dbReference type="FunFam" id="3.30.420.40:FF:000031">
    <property type="entry name" value="tRNA N6-adenosine threonylcarbamoyltransferase"/>
    <property type="match status" value="1"/>
</dbReference>
<dbReference type="Gene3D" id="3.30.420.40">
    <property type="match status" value="2"/>
</dbReference>
<dbReference type="HAMAP" id="MF_01445">
    <property type="entry name" value="TsaD"/>
    <property type="match status" value="1"/>
</dbReference>
<dbReference type="InterPro" id="IPR043129">
    <property type="entry name" value="ATPase_NBD"/>
</dbReference>
<dbReference type="InterPro" id="IPR000905">
    <property type="entry name" value="Gcp-like_dom"/>
</dbReference>
<dbReference type="InterPro" id="IPR017861">
    <property type="entry name" value="KAE1/TsaD"/>
</dbReference>
<dbReference type="InterPro" id="IPR017860">
    <property type="entry name" value="Peptidase_M22_CS"/>
</dbReference>
<dbReference type="InterPro" id="IPR022450">
    <property type="entry name" value="TsaD"/>
</dbReference>
<dbReference type="NCBIfam" id="TIGR00329">
    <property type="entry name" value="gcp_kae1"/>
    <property type="match status" value="1"/>
</dbReference>
<dbReference type="NCBIfam" id="TIGR03723">
    <property type="entry name" value="T6A_TsaD_YgjD"/>
    <property type="match status" value="1"/>
</dbReference>
<dbReference type="PANTHER" id="PTHR11735">
    <property type="entry name" value="TRNA N6-ADENOSINE THREONYLCARBAMOYLTRANSFERASE"/>
    <property type="match status" value="1"/>
</dbReference>
<dbReference type="PANTHER" id="PTHR11735:SF6">
    <property type="entry name" value="TRNA N6-ADENOSINE THREONYLCARBAMOYLTRANSFERASE, MITOCHONDRIAL"/>
    <property type="match status" value="1"/>
</dbReference>
<dbReference type="Pfam" id="PF00814">
    <property type="entry name" value="TsaD"/>
    <property type="match status" value="1"/>
</dbReference>
<dbReference type="PRINTS" id="PR00789">
    <property type="entry name" value="OSIALOPTASE"/>
</dbReference>
<dbReference type="SUPFAM" id="SSF53067">
    <property type="entry name" value="Actin-like ATPase domain"/>
    <property type="match status" value="1"/>
</dbReference>
<dbReference type="PROSITE" id="PS01016">
    <property type="entry name" value="GLYCOPROTEASE"/>
    <property type="match status" value="1"/>
</dbReference>
<comment type="function">
    <text evidence="1">Required for the formation of a threonylcarbamoyl group on adenosine at position 37 (t(6)A37) in tRNAs that read codons beginning with adenine. Is involved in the transfer of the threonylcarbamoyl moiety of threonylcarbamoyl-AMP (TC-AMP) to the N6 group of A37, together with TsaE and TsaB. TsaD likely plays a direct catalytic role in this reaction.</text>
</comment>
<comment type="catalytic activity">
    <reaction evidence="1">
        <text>L-threonylcarbamoyladenylate + adenosine(37) in tRNA = N(6)-L-threonylcarbamoyladenosine(37) in tRNA + AMP + H(+)</text>
        <dbReference type="Rhea" id="RHEA:37059"/>
        <dbReference type="Rhea" id="RHEA-COMP:10162"/>
        <dbReference type="Rhea" id="RHEA-COMP:10163"/>
        <dbReference type="ChEBI" id="CHEBI:15378"/>
        <dbReference type="ChEBI" id="CHEBI:73682"/>
        <dbReference type="ChEBI" id="CHEBI:74411"/>
        <dbReference type="ChEBI" id="CHEBI:74418"/>
        <dbReference type="ChEBI" id="CHEBI:456215"/>
        <dbReference type="EC" id="2.3.1.234"/>
    </reaction>
</comment>
<comment type="cofactor">
    <cofactor evidence="1">
        <name>Fe(2+)</name>
        <dbReference type="ChEBI" id="CHEBI:29033"/>
    </cofactor>
    <text evidence="1">Binds 1 Fe(2+) ion per subunit.</text>
</comment>
<comment type="subcellular location">
    <subcellularLocation>
        <location evidence="1">Cytoplasm</location>
    </subcellularLocation>
</comment>
<comment type="similarity">
    <text evidence="1">Belongs to the KAE1 / TsaD family.</text>
</comment>
<feature type="chain" id="PRO_1000145982" description="tRNA N6-adenosine threonylcarbamoyltransferase">
    <location>
        <begin position="1"/>
        <end position="337"/>
    </location>
</feature>
<feature type="binding site" evidence="1">
    <location>
        <position position="111"/>
    </location>
    <ligand>
        <name>Fe cation</name>
        <dbReference type="ChEBI" id="CHEBI:24875"/>
    </ligand>
</feature>
<feature type="binding site" evidence="1">
    <location>
        <position position="115"/>
    </location>
    <ligand>
        <name>Fe cation</name>
        <dbReference type="ChEBI" id="CHEBI:24875"/>
    </ligand>
</feature>
<feature type="binding site" evidence="1">
    <location>
        <begin position="134"/>
        <end position="138"/>
    </location>
    <ligand>
        <name>substrate</name>
    </ligand>
</feature>
<feature type="binding site" evidence="1">
    <location>
        <position position="167"/>
    </location>
    <ligand>
        <name>substrate</name>
    </ligand>
</feature>
<feature type="binding site" evidence="1">
    <location>
        <position position="180"/>
    </location>
    <ligand>
        <name>substrate</name>
    </ligand>
</feature>
<feature type="binding site" evidence="1">
    <location>
        <position position="272"/>
    </location>
    <ligand>
        <name>substrate</name>
    </ligand>
</feature>
<feature type="binding site" evidence="1">
    <location>
        <position position="300"/>
    </location>
    <ligand>
        <name>Fe cation</name>
        <dbReference type="ChEBI" id="CHEBI:24875"/>
    </ligand>
</feature>
<sequence>MRVLGIETSCDETGVAIYDDAAGLLANQLYSQVKLHADYGGVVPELASRDHVRKTVPLIQAALQEAGLQAQDIDAVAYTAGPGLVGALLVGATIGRSLAFAWDVPAIAVHHMEGHLLAPMLEDNPPEFPFVALLVSGGHTQLISVTGIGSYTLMGESIDDAAGEAFDKTAKLLGLDYPGGPMLSKMAQQGVEKRFVFPRPMTDRPGLDFSFSGLKTFAANTIRDNDDSSQTHADIARAFEDAVVDTLAIKCRRALDQSGFKRLVIAGGVSANRTLRAKLAEMMQKRGGEVFYARPEFCTDNGAMIAYAGMVRLKGGTHAELSVTVRPRWPLAELPAI</sequence>
<gene>
    <name evidence="1" type="primary">tsaD</name>
    <name type="synonym">gcp</name>
    <name type="ordered locus">ETA_04180</name>
</gene>
<organism>
    <name type="scientific">Erwinia tasmaniensis (strain DSM 17950 / CFBP 7177 / CIP 109463 / NCPPB 4357 / Et1/99)</name>
    <dbReference type="NCBI Taxonomy" id="465817"/>
    <lineage>
        <taxon>Bacteria</taxon>
        <taxon>Pseudomonadati</taxon>
        <taxon>Pseudomonadota</taxon>
        <taxon>Gammaproteobacteria</taxon>
        <taxon>Enterobacterales</taxon>
        <taxon>Erwiniaceae</taxon>
        <taxon>Erwinia</taxon>
    </lineage>
</organism>
<protein>
    <recommendedName>
        <fullName evidence="1">tRNA N6-adenosine threonylcarbamoyltransferase</fullName>
        <ecNumber evidence="1">2.3.1.234</ecNumber>
    </recommendedName>
    <alternativeName>
        <fullName evidence="1">N6-L-threonylcarbamoyladenine synthase</fullName>
        <shortName evidence="1">t(6)A synthase</shortName>
    </alternativeName>
    <alternativeName>
        <fullName evidence="1">t(6)A37 threonylcarbamoyladenosine biosynthesis protein TsaD</fullName>
    </alternativeName>
    <alternativeName>
        <fullName evidence="1">tRNA threonylcarbamoyladenosine biosynthesis protein TsaD</fullName>
    </alternativeName>
</protein>
<name>TSAD_ERWT9</name>
<accession>B2VGJ0</accession>
<keyword id="KW-0012">Acyltransferase</keyword>
<keyword id="KW-0963">Cytoplasm</keyword>
<keyword id="KW-0408">Iron</keyword>
<keyword id="KW-0479">Metal-binding</keyword>
<keyword id="KW-1185">Reference proteome</keyword>
<keyword id="KW-0808">Transferase</keyword>
<keyword id="KW-0819">tRNA processing</keyword>
<reference key="1">
    <citation type="journal article" date="2008" name="Environ. Microbiol.">
        <title>The genome of Erwinia tasmaniensis strain Et1/99, a non-pathogenic bacterium in the genus Erwinia.</title>
        <authorList>
            <person name="Kube M."/>
            <person name="Migdoll A.M."/>
            <person name="Mueller I."/>
            <person name="Kuhl H."/>
            <person name="Beck A."/>
            <person name="Reinhardt R."/>
            <person name="Geider K."/>
        </authorList>
    </citation>
    <scope>NUCLEOTIDE SEQUENCE [LARGE SCALE GENOMIC DNA]</scope>
    <source>
        <strain>DSM 17950 / CFBP 7177 / CIP 109463 / NCPPB 4357 / Et1/99</strain>
    </source>
</reference>
<proteinExistence type="inferred from homology"/>